<reference key="1">
    <citation type="submission" date="2006-03" db="EMBL/GenBank/DDBJ databases">
        <title>Complete sequence of Shewanella denitrificans OS217.</title>
        <authorList>
            <consortium name="US DOE Joint Genome Institute"/>
            <person name="Copeland A."/>
            <person name="Lucas S."/>
            <person name="Lapidus A."/>
            <person name="Barry K."/>
            <person name="Detter J.C."/>
            <person name="Glavina del Rio T."/>
            <person name="Hammon N."/>
            <person name="Israni S."/>
            <person name="Dalin E."/>
            <person name="Tice H."/>
            <person name="Pitluck S."/>
            <person name="Brettin T."/>
            <person name="Bruce D."/>
            <person name="Han C."/>
            <person name="Tapia R."/>
            <person name="Gilna P."/>
            <person name="Kiss H."/>
            <person name="Schmutz J."/>
            <person name="Larimer F."/>
            <person name="Land M."/>
            <person name="Hauser L."/>
            <person name="Kyrpides N."/>
            <person name="Lykidis A."/>
            <person name="Richardson P."/>
        </authorList>
    </citation>
    <scope>NUCLEOTIDE SEQUENCE [LARGE SCALE GENOMIC DNA]</scope>
    <source>
        <strain>OS217 / ATCC BAA-1090 / DSM 15013</strain>
    </source>
</reference>
<gene>
    <name evidence="1" type="primary">ttcA</name>
    <name type="ordered locus">Sden_1841</name>
</gene>
<name>TTCA_SHEDO</name>
<feature type="chain" id="PRO_0000348835" description="tRNA-cytidine(32) 2-sulfurtransferase">
    <location>
        <begin position="1"/>
        <end position="323"/>
    </location>
</feature>
<feature type="short sequence motif" description="PP-loop motif" evidence="1">
    <location>
        <begin position="49"/>
        <end position="54"/>
    </location>
</feature>
<feature type="binding site" evidence="1">
    <location>
        <position position="124"/>
    </location>
    <ligand>
        <name>[4Fe-4S] cluster</name>
        <dbReference type="ChEBI" id="CHEBI:49883"/>
    </ligand>
</feature>
<feature type="binding site" evidence="1">
    <location>
        <position position="127"/>
    </location>
    <ligand>
        <name>[4Fe-4S] cluster</name>
        <dbReference type="ChEBI" id="CHEBI:49883"/>
    </ligand>
</feature>
<feature type="binding site" evidence="1">
    <location>
        <position position="215"/>
    </location>
    <ligand>
        <name>[4Fe-4S] cluster</name>
        <dbReference type="ChEBI" id="CHEBI:49883"/>
    </ligand>
</feature>
<accession>Q12N51</accession>
<keyword id="KW-0004">4Fe-4S</keyword>
<keyword id="KW-0067">ATP-binding</keyword>
<keyword id="KW-0963">Cytoplasm</keyword>
<keyword id="KW-0408">Iron</keyword>
<keyword id="KW-0411">Iron-sulfur</keyword>
<keyword id="KW-0460">Magnesium</keyword>
<keyword id="KW-0479">Metal-binding</keyword>
<keyword id="KW-0547">Nucleotide-binding</keyword>
<keyword id="KW-1185">Reference proteome</keyword>
<keyword id="KW-0694">RNA-binding</keyword>
<keyword id="KW-0808">Transferase</keyword>
<keyword id="KW-0819">tRNA processing</keyword>
<keyword id="KW-0820">tRNA-binding</keyword>
<proteinExistence type="inferred from homology"/>
<dbReference type="EC" id="2.8.1.-" evidence="1"/>
<dbReference type="EMBL" id="CP000302">
    <property type="protein sequence ID" value="ABE55125.1"/>
    <property type="molecule type" value="Genomic_DNA"/>
</dbReference>
<dbReference type="RefSeq" id="WP_011496282.1">
    <property type="nucleotide sequence ID" value="NC_007954.1"/>
</dbReference>
<dbReference type="SMR" id="Q12N51"/>
<dbReference type="STRING" id="318161.Sden_1841"/>
<dbReference type="KEGG" id="sdn:Sden_1841"/>
<dbReference type="eggNOG" id="COG0037">
    <property type="taxonomic scope" value="Bacteria"/>
</dbReference>
<dbReference type="HOGENOM" id="CLU_026481_0_0_6"/>
<dbReference type="Proteomes" id="UP000001982">
    <property type="component" value="Chromosome"/>
</dbReference>
<dbReference type="GO" id="GO:0005737">
    <property type="term" value="C:cytoplasm"/>
    <property type="evidence" value="ECO:0007669"/>
    <property type="project" value="UniProtKB-SubCell"/>
</dbReference>
<dbReference type="GO" id="GO:0051539">
    <property type="term" value="F:4 iron, 4 sulfur cluster binding"/>
    <property type="evidence" value="ECO:0007669"/>
    <property type="project" value="UniProtKB-UniRule"/>
</dbReference>
<dbReference type="GO" id="GO:0005524">
    <property type="term" value="F:ATP binding"/>
    <property type="evidence" value="ECO:0007669"/>
    <property type="project" value="UniProtKB-UniRule"/>
</dbReference>
<dbReference type="GO" id="GO:0000287">
    <property type="term" value="F:magnesium ion binding"/>
    <property type="evidence" value="ECO:0007669"/>
    <property type="project" value="UniProtKB-UniRule"/>
</dbReference>
<dbReference type="GO" id="GO:0016783">
    <property type="term" value="F:sulfurtransferase activity"/>
    <property type="evidence" value="ECO:0007669"/>
    <property type="project" value="UniProtKB-UniRule"/>
</dbReference>
<dbReference type="GO" id="GO:0000049">
    <property type="term" value="F:tRNA binding"/>
    <property type="evidence" value="ECO:0007669"/>
    <property type="project" value="UniProtKB-KW"/>
</dbReference>
<dbReference type="GO" id="GO:0034227">
    <property type="term" value="P:tRNA thio-modification"/>
    <property type="evidence" value="ECO:0007669"/>
    <property type="project" value="UniProtKB-UniRule"/>
</dbReference>
<dbReference type="CDD" id="cd24138">
    <property type="entry name" value="TtcA-like"/>
    <property type="match status" value="1"/>
</dbReference>
<dbReference type="Gene3D" id="3.40.50.620">
    <property type="entry name" value="HUPs"/>
    <property type="match status" value="1"/>
</dbReference>
<dbReference type="HAMAP" id="MF_01850">
    <property type="entry name" value="TtcA"/>
    <property type="match status" value="1"/>
</dbReference>
<dbReference type="InterPro" id="IPR014729">
    <property type="entry name" value="Rossmann-like_a/b/a_fold"/>
</dbReference>
<dbReference type="InterPro" id="IPR011063">
    <property type="entry name" value="TilS/TtcA_N"/>
</dbReference>
<dbReference type="InterPro" id="IPR012089">
    <property type="entry name" value="tRNA_Cyd_32_2_STrfase"/>
</dbReference>
<dbReference type="NCBIfam" id="NF007972">
    <property type="entry name" value="PRK10696.1"/>
    <property type="match status" value="1"/>
</dbReference>
<dbReference type="PANTHER" id="PTHR43686:SF1">
    <property type="entry name" value="AMINOTRAN_5 DOMAIN-CONTAINING PROTEIN"/>
    <property type="match status" value="1"/>
</dbReference>
<dbReference type="PANTHER" id="PTHR43686">
    <property type="entry name" value="SULFURTRANSFERASE-RELATED"/>
    <property type="match status" value="1"/>
</dbReference>
<dbReference type="Pfam" id="PF01171">
    <property type="entry name" value="ATP_bind_3"/>
    <property type="match status" value="1"/>
</dbReference>
<dbReference type="SUPFAM" id="SSF52402">
    <property type="entry name" value="Adenine nucleotide alpha hydrolases-like"/>
    <property type="match status" value="1"/>
</dbReference>
<comment type="function">
    <text evidence="1">Catalyzes the ATP-dependent 2-thiolation of cytidine in position 32 of tRNA, to form 2-thiocytidine (s(2)C32). The sulfur atoms are provided by the cysteine/cysteine desulfurase (IscS) system.</text>
</comment>
<comment type="catalytic activity">
    <reaction evidence="1">
        <text>cytidine(32) in tRNA + S-sulfanyl-L-cysteinyl-[cysteine desulfurase] + AH2 + ATP = 2-thiocytidine(32) in tRNA + L-cysteinyl-[cysteine desulfurase] + A + AMP + diphosphate + H(+)</text>
        <dbReference type="Rhea" id="RHEA:57048"/>
        <dbReference type="Rhea" id="RHEA-COMP:10288"/>
        <dbReference type="Rhea" id="RHEA-COMP:12157"/>
        <dbReference type="Rhea" id="RHEA-COMP:12158"/>
        <dbReference type="Rhea" id="RHEA-COMP:14821"/>
        <dbReference type="ChEBI" id="CHEBI:13193"/>
        <dbReference type="ChEBI" id="CHEBI:15378"/>
        <dbReference type="ChEBI" id="CHEBI:17499"/>
        <dbReference type="ChEBI" id="CHEBI:29950"/>
        <dbReference type="ChEBI" id="CHEBI:30616"/>
        <dbReference type="ChEBI" id="CHEBI:33019"/>
        <dbReference type="ChEBI" id="CHEBI:61963"/>
        <dbReference type="ChEBI" id="CHEBI:82748"/>
        <dbReference type="ChEBI" id="CHEBI:141453"/>
        <dbReference type="ChEBI" id="CHEBI:456215"/>
    </reaction>
    <physiologicalReaction direction="left-to-right" evidence="1">
        <dbReference type="Rhea" id="RHEA:57049"/>
    </physiologicalReaction>
</comment>
<comment type="cofactor">
    <cofactor evidence="1">
        <name>Mg(2+)</name>
        <dbReference type="ChEBI" id="CHEBI:18420"/>
    </cofactor>
</comment>
<comment type="cofactor">
    <cofactor evidence="1">
        <name>[4Fe-4S] cluster</name>
        <dbReference type="ChEBI" id="CHEBI:49883"/>
    </cofactor>
    <text evidence="1">Binds 1 [4Fe-4S] cluster per subunit. The cluster is chelated by three Cys residues, the fourth Fe has a free coordination site that may bind a sulfur atom transferred from the persulfide of IscS.</text>
</comment>
<comment type="pathway">
    <text evidence="1">tRNA modification.</text>
</comment>
<comment type="subunit">
    <text evidence="1">Homodimer.</text>
</comment>
<comment type="subcellular location">
    <subcellularLocation>
        <location evidence="1">Cytoplasm</location>
    </subcellularLocation>
</comment>
<comment type="miscellaneous">
    <text evidence="1">The thiolation reaction likely consists of two steps: a first activation step by ATP to form an adenylated intermediate of the target base of tRNA, and a second nucleophilic substitution step of the sulfur (S) atom supplied by the hydrosulfide attached to the Fe-S cluster.</text>
</comment>
<comment type="similarity">
    <text evidence="1">Belongs to the TtcA family.</text>
</comment>
<evidence type="ECO:0000255" key="1">
    <source>
        <dbReference type="HAMAP-Rule" id="MF_01850"/>
    </source>
</evidence>
<protein>
    <recommendedName>
        <fullName evidence="1">tRNA-cytidine(32) 2-sulfurtransferase</fullName>
        <ecNumber evidence="1">2.8.1.-</ecNumber>
    </recommendedName>
    <alternativeName>
        <fullName evidence="1">Two-thiocytidine biosynthesis protein A</fullName>
    </alternativeName>
    <alternativeName>
        <fullName evidence="1">tRNA 2-thiocytidine biosynthesis protein TtcA</fullName>
    </alternativeName>
</protein>
<sequence length="323" mass="36246">MSDIVVDDFSEKQAARLNKLSKRLHREVGKAIADYQMIEEGDRIMCCLSGGKDSYAMLDILLNLQKRAPISFEIVAVNLDQKQPGFPEHILPAYLDNLGVAYHILEKDTYSIVKEKIPEGKTTCSLCSRLRRGTLYGFAQRIGATKIALGHHRDDIIETLFLNMFFAGKMKAMPPKLLSDDGANMVIRPLAYCREKDIAEYAKFKEFPIIPCNLCGSQENLKRGAVKDMLKQWDKHHPGRIESIFTAMQNTSPSQGVDREQFDFAGLTRDPDAPMRGDVAESDLPAFDFLDTSNSGHIDLDAAKARSDLLSQQRIDIVSSYKP</sequence>
<organism>
    <name type="scientific">Shewanella denitrificans (strain OS217 / ATCC BAA-1090 / DSM 15013)</name>
    <dbReference type="NCBI Taxonomy" id="318161"/>
    <lineage>
        <taxon>Bacteria</taxon>
        <taxon>Pseudomonadati</taxon>
        <taxon>Pseudomonadota</taxon>
        <taxon>Gammaproteobacteria</taxon>
        <taxon>Alteromonadales</taxon>
        <taxon>Shewanellaceae</taxon>
        <taxon>Shewanella</taxon>
    </lineage>
</organism>